<accession>Q2T1B8</accession>
<gene>
    <name evidence="1" type="primary">rplY</name>
    <name evidence="1" type="synonym">ctc</name>
    <name type="ordered locus">BTH_I0473</name>
</gene>
<proteinExistence type="inferred from homology"/>
<protein>
    <recommendedName>
        <fullName evidence="1">Large ribosomal subunit protein bL25</fullName>
    </recommendedName>
    <alternativeName>
        <fullName evidence="2">50S ribosomal protein L25</fullName>
    </alternativeName>
    <alternativeName>
        <fullName evidence="1">General stress protein CTC</fullName>
    </alternativeName>
</protein>
<evidence type="ECO:0000255" key="1">
    <source>
        <dbReference type="HAMAP-Rule" id="MF_01334"/>
    </source>
</evidence>
<evidence type="ECO:0000305" key="2"/>
<reference key="1">
    <citation type="journal article" date="2005" name="BMC Genomics">
        <title>Bacterial genome adaptation to niches: divergence of the potential virulence genes in three Burkholderia species of different survival strategies.</title>
        <authorList>
            <person name="Kim H.S."/>
            <person name="Schell M.A."/>
            <person name="Yu Y."/>
            <person name="Ulrich R.L."/>
            <person name="Sarria S.H."/>
            <person name="Nierman W.C."/>
            <person name="DeShazer D."/>
        </authorList>
    </citation>
    <scope>NUCLEOTIDE SEQUENCE [LARGE SCALE GENOMIC DNA]</scope>
    <source>
        <strain>ATCC 700388 / DSM 13276 / CCUG 48851 / CIP 106301 / E264</strain>
    </source>
</reference>
<organism>
    <name type="scientific">Burkholderia thailandensis (strain ATCC 700388 / DSM 13276 / CCUG 48851 / CIP 106301 / E264)</name>
    <dbReference type="NCBI Taxonomy" id="271848"/>
    <lineage>
        <taxon>Bacteria</taxon>
        <taxon>Pseudomonadati</taxon>
        <taxon>Pseudomonadota</taxon>
        <taxon>Betaproteobacteria</taxon>
        <taxon>Burkholderiales</taxon>
        <taxon>Burkholderiaceae</taxon>
        <taxon>Burkholderia</taxon>
        <taxon>pseudomallei group</taxon>
    </lineage>
</organism>
<feature type="chain" id="PRO_0000244197" description="Large ribosomal subunit protein bL25">
    <location>
        <begin position="1"/>
        <end position="208"/>
    </location>
</feature>
<keyword id="KW-0687">Ribonucleoprotein</keyword>
<keyword id="KW-0689">Ribosomal protein</keyword>
<keyword id="KW-0694">RNA-binding</keyword>
<keyword id="KW-0699">rRNA-binding</keyword>
<dbReference type="EMBL" id="CP000086">
    <property type="protein sequence ID" value="ABC38525.1"/>
    <property type="status" value="ALT_INIT"/>
    <property type="molecule type" value="Genomic_DNA"/>
</dbReference>
<dbReference type="SMR" id="Q2T1B8"/>
<dbReference type="KEGG" id="bte:BTH_I0473"/>
<dbReference type="HOGENOM" id="CLU_075939_0_1_4"/>
<dbReference type="Proteomes" id="UP000001930">
    <property type="component" value="Chromosome I"/>
</dbReference>
<dbReference type="GO" id="GO:0022625">
    <property type="term" value="C:cytosolic large ribosomal subunit"/>
    <property type="evidence" value="ECO:0007669"/>
    <property type="project" value="TreeGrafter"/>
</dbReference>
<dbReference type="GO" id="GO:0008097">
    <property type="term" value="F:5S rRNA binding"/>
    <property type="evidence" value="ECO:0007669"/>
    <property type="project" value="InterPro"/>
</dbReference>
<dbReference type="GO" id="GO:0003735">
    <property type="term" value="F:structural constituent of ribosome"/>
    <property type="evidence" value="ECO:0007669"/>
    <property type="project" value="InterPro"/>
</dbReference>
<dbReference type="GO" id="GO:0006412">
    <property type="term" value="P:translation"/>
    <property type="evidence" value="ECO:0007669"/>
    <property type="project" value="UniProtKB-UniRule"/>
</dbReference>
<dbReference type="CDD" id="cd00495">
    <property type="entry name" value="Ribosomal_L25_TL5_CTC"/>
    <property type="match status" value="1"/>
</dbReference>
<dbReference type="Gene3D" id="2.170.120.20">
    <property type="entry name" value="Ribosomal protein L25, beta domain"/>
    <property type="match status" value="1"/>
</dbReference>
<dbReference type="Gene3D" id="2.40.240.10">
    <property type="entry name" value="Ribosomal Protein L25, Chain P"/>
    <property type="match status" value="1"/>
</dbReference>
<dbReference type="HAMAP" id="MF_01334">
    <property type="entry name" value="Ribosomal_bL25_CTC"/>
    <property type="match status" value="1"/>
</dbReference>
<dbReference type="InterPro" id="IPR020056">
    <property type="entry name" value="Rbsml_bL25/Gln-tRNA_synth_N"/>
</dbReference>
<dbReference type="InterPro" id="IPR011035">
    <property type="entry name" value="Ribosomal_bL25/Gln-tRNA_synth"/>
</dbReference>
<dbReference type="InterPro" id="IPR020057">
    <property type="entry name" value="Ribosomal_bL25_b-dom"/>
</dbReference>
<dbReference type="InterPro" id="IPR037121">
    <property type="entry name" value="Ribosomal_bL25_C"/>
</dbReference>
<dbReference type="InterPro" id="IPR001021">
    <property type="entry name" value="Ribosomal_bL25_long"/>
</dbReference>
<dbReference type="InterPro" id="IPR029751">
    <property type="entry name" value="Ribosomal_L25_dom"/>
</dbReference>
<dbReference type="InterPro" id="IPR020930">
    <property type="entry name" value="Ribosomal_uL5_bac-type"/>
</dbReference>
<dbReference type="NCBIfam" id="TIGR00731">
    <property type="entry name" value="bL25_bact_ctc"/>
    <property type="match status" value="1"/>
</dbReference>
<dbReference type="NCBIfam" id="NF004128">
    <property type="entry name" value="PRK05618.1-2"/>
    <property type="match status" value="1"/>
</dbReference>
<dbReference type="NCBIfam" id="NF004130">
    <property type="entry name" value="PRK05618.1-5"/>
    <property type="match status" value="1"/>
</dbReference>
<dbReference type="NCBIfam" id="NF004612">
    <property type="entry name" value="PRK05943.1"/>
    <property type="match status" value="1"/>
</dbReference>
<dbReference type="PANTHER" id="PTHR33284">
    <property type="entry name" value="RIBOSOMAL PROTEIN L25/GLN-TRNA SYNTHETASE, ANTI-CODON-BINDING DOMAIN-CONTAINING PROTEIN"/>
    <property type="match status" value="1"/>
</dbReference>
<dbReference type="PANTHER" id="PTHR33284:SF1">
    <property type="entry name" value="RIBOSOMAL PROTEIN L25_GLN-TRNA SYNTHETASE, ANTI-CODON-BINDING DOMAIN-CONTAINING PROTEIN"/>
    <property type="match status" value="1"/>
</dbReference>
<dbReference type="Pfam" id="PF01386">
    <property type="entry name" value="Ribosomal_L25p"/>
    <property type="match status" value="1"/>
</dbReference>
<dbReference type="Pfam" id="PF14693">
    <property type="entry name" value="Ribosomal_TL5_C"/>
    <property type="match status" value="1"/>
</dbReference>
<dbReference type="SUPFAM" id="SSF50715">
    <property type="entry name" value="Ribosomal protein L25-like"/>
    <property type="match status" value="1"/>
</dbReference>
<comment type="function">
    <text evidence="1">This is one of the proteins that binds to the 5S RNA in the ribosome where it forms part of the central protuberance.</text>
</comment>
<comment type="subunit">
    <text evidence="1">Part of the 50S ribosomal subunit; part of the 5S rRNA/L5/L18/L25 subcomplex. Contacts the 5S rRNA. Binds to the 5S rRNA independently of L5 and L18.</text>
</comment>
<comment type="similarity">
    <text evidence="1">Belongs to the bacterial ribosomal protein bL25 family. CTC subfamily.</text>
</comment>
<comment type="sequence caution" evidence="2">
    <conflict type="erroneous initiation">
        <sequence resource="EMBL-CDS" id="ABC38525"/>
    </conflict>
</comment>
<name>RL25_BURTA</name>
<sequence>MENHMKVVAFERQQQGTGASRRLRNAGKTTGIVYGGEAAPQMIELDHNALWHALKKEAFHSSILDLEVAGKSQRVLLRDVQYHPFRQLVLHVDFQRIDPKKKLHTKVPLHFLNAESSPAVKLSSAVVSHVVTEIEVECLPADLPEFLEVDLSKIEAGQSLHAKDIVLPNGVALTPHVDAENPVVASATIPAGAVSEEAAAGEGETPAA</sequence>